<dbReference type="EMBL" id="CP000921">
    <property type="protein sequence ID" value="ACO22998.1"/>
    <property type="molecule type" value="Genomic_DNA"/>
</dbReference>
<dbReference type="RefSeq" id="WP_000782676.1">
    <property type="nucleotide sequence ID" value="NC_012469.1"/>
</dbReference>
<dbReference type="SMR" id="C1CQZ3"/>
<dbReference type="GeneID" id="45653378"/>
<dbReference type="KEGG" id="snt:SPT_0911"/>
<dbReference type="HOGENOM" id="CLU_071496_1_0_9"/>
<dbReference type="GO" id="GO:0030674">
    <property type="term" value="F:protein-macromolecule adaptor activity"/>
    <property type="evidence" value="ECO:0007669"/>
    <property type="project" value="UniProtKB-UniRule"/>
</dbReference>
<dbReference type="Gene3D" id="3.30.70.1950">
    <property type="match status" value="1"/>
</dbReference>
<dbReference type="HAMAP" id="MF_01124">
    <property type="entry name" value="MecA"/>
    <property type="match status" value="1"/>
</dbReference>
<dbReference type="InterPro" id="IPR038471">
    <property type="entry name" value="MecA_C_sf"/>
</dbReference>
<dbReference type="InterPro" id="IPR008681">
    <property type="entry name" value="Neg-reg_MecA"/>
</dbReference>
<dbReference type="NCBIfam" id="NF002643">
    <property type="entry name" value="PRK02315.1-4"/>
    <property type="match status" value="1"/>
</dbReference>
<dbReference type="PANTHER" id="PTHR39161">
    <property type="entry name" value="ADAPTER PROTEIN MECA"/>
    <property type="match status" value="1"/>
</dbReference>
<dbReference type="PANTHER" id="PTHR39161:SF1">
    <property type="entry name" value="ADAPTER PROTEIN MECA 1"/>
    <property type="match status" value="1"/>
</dbReference>
<dbReference type="Pfam" id="PF05389">
    <property type="entry name" value="MecA"/>
    <property type="match status" value="1"/>
</dbReference>
<dbReference type="PIRSF" id="PIRSF029008">
    <property type="entry name" value="MecA"/>
    <property type="match status" value="1"/>
</dbReference>
<evidence type="ECO:0000255" key="1">
    <source>
        <dbReference type="HAMAP-Rule" id="MF_01124"/>
    </source>
</evidence>
<comment type="function">
    <text evidence="1">Enables the recognition and targeting of unfolded and aggregated proteins to the ClpC protease or to other proteins involved in proteolysis.</text>
</comment>
<comment type="subunit">
    <text evidence="1">Homodimer.</text>
</comment>
<comment type="domain">
    <text>The N-terminal domain probably binds unfolded/aggregated proteins; the C-terminal domain interacts with ClpC.</text>
</comment>
<comment type="similarity">
    <text evidence="1">Belongs to the MecA family.</text>
</comment>
<gene>
    <name evidence="1" type="primary">mecA</name>
    <name type="ordered locus">SPT_0911</name>
</gene>
<proteinExistence type="inferred from homology"/>
<feature type="chain" id="PRO_1000164060" description="Adapter protein MecA">
    <location>
        <begin position="1"/>
        <end position="245"/>
    </location>
</feature>
<organism>
    <name type="scientific">Streptococcus pneumoniae (strain Taiwan19F-14)</name>
    <dbReference type="NCBI Taxonomy" id="487213"/>
    <lineage>
        <taxon>Bacteria</taxon>
        <taxon>Bacillati</taxon>
        <taxon>Bacillota</taxon>
        <taxon>Bacilli</taxon>
        <taxon>Lactobacillales</taxon>
        <taxon>Streptococcaceae</taxon>
        <taxon>Streptococcus</taxon>
    </lineage>
</organism>
<name>MECA_STRZT</name>
<protein>
    <recommendedName>
        <fullName evidence="1">Adapter protein MecA</fullName>
    </recommendedName>
</protein>
<sequence>MKMKQISDTTLKITMSLEDLMDRGMEIADFLVPQEKTEEFFYAILDELEMPDSFLDTGMLSFRVTPKPDKVDVFVTKSKIDQNLDFEDLSDLPDMEELAQMSPDEFIKTLEKSIADKTKDDIEAIQSLEQVEAKEEEQEQAEQEAESKKEPYIYYILSFAKLADLVAFAKTVTFEMETSELYKMNERYYLTILVDIENHPSPYPAWLLARMREFADDSDISRSVLQEYGQVLMSHDAVLNLQKIG</sequence>
<accession>C1CQZ3</accession>
<reference key="1">
    <citation type="journal article" date="2010" name="Genome Biol.">
        <title>Structure and dynamics of the pan-genome of Streptococcus pneumoniae and closely related species.</title>
        <authorList>
            <person name="Donati C."/>
            <person name="Hiller N.L."/>
            <person name="Tettelin H."/>
            <person name="Muzzi A."/>
            <person name="Croucher N.J."/>
            <person name="Angiuoli S.V."/>
            <person name="Oggioni M."/>
            <person name="Dunning Hotopp J.C."/>
            <person name="Hu F.Z."/>
            <person name="Riley D.R."/>
            <person name="Covacci A."/>
            <person name="Mitchell T.J."/>
            <person name="Bentley S.D."/>
            <person name="Kilian M."/>
            <person name="Ehrlich G.D."/>
            <person name="Rappuoli R."/>
            <person name="Moxon E.R."/>
            <person name="Masignani V."/>
        </authorList>
    </citation>
    <scope>NUCLEOTIDE SEQUENCE [LARGE SCALE GENOMIC DNA]</scope>
    <source>
        <strain>Taiwan19F-14</strain>
    </source>
</reference>